<proteinExistence type="evidence at protein level"/>
<organism>
    <name type="scientific">Homo sapiens</name>
    <name type="common">Human</name>
    <dbReference type="NCBI Taxonomy" id="9606"/>
    <lineage>
        <taxon>Eukaryota</taxon>
        <taxon>Metazoa</taxon>
        <taxon>Chordata</taxon>
        <taxon>Craniata</taxon>
        <taxon>Vertebrata</taxon>
        <taxon>Euteleostomi</taxon>
        <taxon>Mammalia</taxon>
        <taxon>Eutheria</taxon>
        <taxon>Euarchontoglires</taxon>
        <taxon>Primates</taxon>
        <taxon>Haplorrhini</taxon>
        <taxon>Catarrhini</taxon>
        <taxon>Hominidae</taxon>
        <taxon>Homo</taxon>
    </lineage>
</organism>
<keyword id="KW-0238">DNA-binding</keyword>
<keyword id="KW-0479">Metal-binding</keyword>
<keyword id="KW-0539">Nucleus</keyword>
<keyword id="KW-1267">Proteomics identification</keyword>
<keyword id="KW-1185">Reference proteome</keyword>
<keyword id="KW-0677">Repeat</keyword>
<keyword id="KW-0678">Repressor</keyword>
<keyword id="KW-0804">Transcription</keyword>
<keyword id="KW-0805">Transcription regulation</keyword>
<keyword id="KW-0862">Zinc</keyword>
<keyword id="KW-0863">Zinc-finger</keyword>
<dbReference type="EMBL" id="AF295096">
    <property type="protein sequence ID" value="AAG17439.1"/>
    <property type="molecule type" value="mRNA"/>
</dbReference>
<dbReference type="EMBL" id="AF309561">
    <property type="protein sequence ID" value="AAG25714.1"/>
    <property type="molecule type" value="mRNA"/>
</dbReference>
<dbReference type="EMBL" id="AK023467">
    <property type="protein sequence ID" value="BAB14583.1"/>
    <property type="molecule type" value="mRNA"/>
</dbReference>
<dbReference type="EMBL" id="AC011460">
    <property type="status" value="NOT_ANNOTATED_CDS"/>
    <property type="molecule type" value="Genomic_DNA"/>
</dbReference>
<dbReference type="EMBL" id="CH471135">
    <property type="protein sequence ID" value="EAW72056.1"/>
    <property type="molecule type" value="Genomic_DNA"/>
</dbReference>
<dbReference type="EMBL" id="BC009921">
    <property type="protein sequence ID" value="AAH09921.1"/>
    <property type="molecule type" value="mRNA"/>
</dbReference>
<dbReference type="CCDS" id="CCDS12845.1"/>
<dbReference type="RefSeq" id="NP_067645.3">
    <property type="nucleotide sequence ID" value="NM_021632.3"/>
</dbReference>
<dbReference type="RefSeq" id="XP_016882587.1">
    <property type="nucleotide sequence ID" value="XM_017027098.2"/>
</dbReference>
<dbReference type="RefSeq" id="XP_016882588.1">
    <property type="nucleotide sequence ID" value="XM_017027099.2"/>
</dbReference>
<dbReference type="RefSeq" id="XP_016882589.1">
    <property type="nucleotide sequence ID" value="XM_017027100.1"/>
</dbReference>
<dbReference type="RefSeq" id="XP_047295140.1">
    <property type="nucleotide sequence ID" value="XM_047439184.1"/>
</dbReference>
<dbReference type="RefSeq" id="XP_047295141.1">
    <property type="nucleotide sequence ID" value="XM_047439185.1"/>
</dbReference>
<dbReference type="RefSeq" id="XP_054177635.1">
    <property type="nucleotide sequence ID" value="XM_054321660.1"/>
</dbReference>
<dbReference type="RefSeq" id="XP_054177636.1">
    <property type="nucleotide sequence ID" value="XM_054321661.1"/>
</dbReference>
<dbReference type="RefSeq" id="XP_054177637.1">
    <property type="nucleotide sequence ID" value="XM_054321662.1"/>
</dbReference>
<dbReference type="RefSeq" id="XP_054177638.1">
    <property type="nucleotide sequence ID" value="XM_054321663.1"/>
</dbReference>
<dbReference type="SMR" id="Q9GZX5"/>
<dbReference type="BioGRID" id="121889">
    <property type="interactions" value="27"/>
</dbReference>
<dbReference type="CORUM" id="Q9GZX5"/>
<dbReference type="FunCoup" id="Q9GZX5">
    <property type="interactions" value="149"/>
</dbReference>
<dbReference type="IntAct" id="Q9GZX5">
    <property type="interactions" value="13"/>
</dbReference>
<dbReference type="MINT" id="Q9GZX5"/>
<dbReference type="STRING" id="9606.ENSP00000243644"/>
<dbReference type="iPTMnet" id="Q9GZX5"/>
<dbReference type="PhosphoSitePlus" id="Q9GZX5"/>
<dbReference type="BioMuta" id="ZNF350"/>
<dbReference type="DMDM" id="313104255"/>
<dbReference type="jPOST" id="Q9GZX5"/>
<dbReference type="MassIVE" id="Q9GZX5"/>
<dbReference type="PaxDb" id="9606-ENSP00000243644"/>
<dbReference type="PeptideAtlas" id="Q9GZX5"/>
<dbReference type="ProteomicsDB" id="80166"/>
<dbReference type="Antibodypedia" id="49600">
    <property type="antibodies" value="200 antibodies from 25 providers"/>
</dbReference>
<dbReference type="DNASU" id="59348"/>
<dbReference type="Ensembl" id="ENST00000243644.9">
    <property type="protein sequence ID" value="ENSP00000243644.3"/>
    <property type="gene ID" value="ENSG00000256683.7"/>
</dbReference>
<dbReference type="GeneID" id="59348"/>
<dbReference type="KEGG" id="hsa:59348"/>
<dbReference type="MANE-Select" id="ENST00000243644.9">
    <property type="protein sequence ID" value="ENSP00000243644.3"/>
    <property type="RefSeq nucleotide sequence ID" value="NM_021632.4"/>
    <property type="RefSeq protein sequence ID" value="NP_067645.3"/>
</dbReference>
<dbReference type="UCSC" id="uc002pyd.4">
    <property type="organism name" value="human"/>
</dbReference>
<dbReference type="AGR" id="HGNC:16656"/>
<dbReference type="CTD" id="59348"/>
<dbReference type="DisGeNET" id="59348"/>
<dbReference type="GeneCards" id="ZNF350"/>
<dbReference type="HGNC" id="HGNC:16656">
    <property type="gene designation" value="ZNF350"/>
</dbReference>
<dbReference type="HPA" id="ENSG00000256683">
    <property type="expression patterns" value="Low tissue specificity"/>
</dbReference>
<dbReference type="MIM" id="605422">
    <property type="type" value="gene"/>
</dbReference>
<dbReference type="neXtProt" id="NX_Q9GZX5"/>
<dbReference type="OpenTargets" id="ENSG00000256683"/>
<dbReference type="PharmGKB" id="PA134972827"/>
<dbReference type="VEuPathDB" id="HostDB:ENSG00000256683"/>
<dbReference type="eggNOG" id="KOG1721">
    <property type="taxonomic scope" value="Eukaryota"/>
</dbReference>
<dbReference type="GeneTree" id="ENSGT00940000162449"/>
<dbReference type="HOGENOM" id="CLU_002678_0_2_1"/>
<dbReference type="InParanoid" id="Q9GZX5"/>
<dbReference type="OMA" id="CHENDAF"/>
<dbReference type="OrthoDB" id="10072647at2759"/>
<dbReference type="PAN-GO" id="Q9GZX5">
    <property type="GO annotations" value="3 GO annotations based on evolutionary models"/>
</dbReference>
<dbReference type="PhylomeDB" id="Q9GZX5"/>
<dbReference type="TreeFam" id="TF340593"/>
<dbReference type="PathwayCommons" id="Q9GZX5"/>
<dbReference type="Reactome" id="R-HSA-212436">
    <property type="pathway name" value="Generic Transcription Pathway"/>
</dbReference>
<dbReference type="Reactome" id="R-HSA-3899300">
    <property type="pathway name" value="SUMOylation of transcription cofactors"/>
</dbReference>
<dbReference type="SignaLink" id="Q9GZX5"/>
<dbReference type="BioGRID-ORCS" id="59348">
    <property type="hits" value="11 hits in 1154 CRISPR screens"/>
</dbReference>
<dbReference type="ChiTaRS" id="ZNF350">
    <property type="organism name" value="human"/>
</dbReference>
<dbReference type="GeneWiki" id="ZNF350"/>
<dbReference type="GenomeRNAi" id="59348"/>
<dbReference type="Pharos" id="Q9GZX5">
    <property type="development level" value="Tbio"/>
</dbReference>
<dbReference type="PRO" id="PR:Q9GZX5"/>
<dbReference type="Proteomes" id="UP000005640">
    <property type="component" value="Chromosome 19"/>
</dbReference>
<dbReference type="RNAct" id="Q9GZX5">
    <property type="molecule type" value="protein"/>
</dbReference>
<dbReference type="Bgee" id="ENSG00000256683">
    <property type="expression patterns" value="Expressed in calcaneal tendon and 150 other cell types or tissues"/>
</dbReference>
<dbReference type="ExpressionAtlas" id="Q9GZX5">
    <property type="expression patterns" value="baseline and differential"/>
</dbReference>
<dbReference type="GO" id="GO:0016604">
    <property type="term" value="C:nuclear body"/>
    <property type="evidence" value="ECO:0000314"/>
    <property type="project" value="HPA"/>
</dbReference>
<dbReference type="GO" id="GO:0016363">
    <property type="term" value="C:nuclear matrix"/>
    <property type="evidence" value="ECO:0007669"/>
    <property type="project" value="UniProtKB-SubCell"/>
</dbReference>
<dbReference type="GO" id="GO:0005654">
    <property type="term" value="C:nucleoplasm"/>
    <property type="evidence" value="ECO:0000314"/>
    <property type="project" value="HPA"/>
</dbReference>
<dbReference type="GO" id="GO:0005634">
    <property type="term" value="C:nucleus"/>
    <property type="evidence" value="ECO:0000314"/>
    <property type="project" value="UniProtKB"/>
</dbReference>
<dbReference type="GO" id="GO:0017053">
    <property type="term" value="C:transcription repressor complex"/>
    <property type="evidence" value="ECO:0000314"/>
    <property type="project" value="UniProtKB"/>
</dbReference>
<dbReference type="GO" id="GO:0003677">
    <property type="term" value="F:DNA binding"/>
    <property type="evidence" value="ECO:0000314"/>
    <property type="project" value="UniProtKB"/>
</dbReference>
<dbReference type="GO" id="GO:0003700">
    <property type="term" value="F:DNA-binding transcription factor activity"/>
    <property type="evidence" value="ECO:0000318"/>
    <property type="project" value="GO_Central"/>
</dbReference>
<dbReference type="GO" id="GO:0001227">
    <property type="term" value="F:DNA-binding transcription repressor activity, RNA polymerase II-specific"/>
    <property type="evidence" value="ECO:0000314"/>
    <property type="project" value="NTNU_SB"/>
</dbReference>
<dbReference type="GO" id="GO:0000978">
    <property type="term" value="F:RNA polymerase II cis-regulatory region sequence-specific DNA binding"/>
    <property type="evidence" value="ECO:0000318"/>
    <property type="project" value="GO_Central"/>
</dbReference>
<dbReference type="GO" id="GO:0001162">
    <property type="term" value="F:RNA polymerase II intronic transcription regulatory region sequence-specific DNA binding"/>
    <property type="evidence" value="ECO:0000314"/>
    <property type="project" value="NTNU_SB"/>
</dbReference>
<dbReference type="GO" id="GO:0008270">
    <property type="term" value="F:zinc ion binding"/>
    <property type="evidence" value="ECO:0007669"/>
    <property type="project" value="UniProtKB-KW"/>
</dbReference>
<dbReference type="GO" id="GO:0045892">
    <property type="term" value="P:negative regulation of DNA-templated transcription"/>
    <property type="evidence" value="ECO:0000314"/>
    <property type="project" value="UniProtKB"/>
</dbReference>
<dbReference type="GO" id="GO:0000122">
    <property type="term" value="P:negative regulation of transcription by RNA polymerase II"/>
    <property type="evidence" value="ECO:0000314"/>
    <property type="project" value="NTNU_SB"/>
</dbReference>
<dbReference type="GO" id="GO:0006355">
    <property type="term" value="P:regulation of DNA-templated transcription"/>
    <property type="evidence" value="ECO:0000314"/>
    <property type="project" value="UniProtKB"/>
</dbReference>
<dbReference type="GO" id="GO:0006357">
    <property type="term" value="P:regulation of transcription by RNA polymerase II"/>
    <property type="evidence" value="ECO:0000318"/>
    <property type="project" value="GO_Central"/>
</dbReference>
<dbReference type="CDD" id="cd07765">
    <property type="entry name" value="KRAB_A-box"/>
    <property type="match status" value="1"/>
</dbReference>
<dbReference type="FunFam" id="3.30.160.60:FF:002063">
    <property type="entry name" value="RB associated KRAB zinc finger"/>
    <property type="match status" value="1"/>
</dbReference>
<dbReference type="FunFam" id="3.30.160.60:FF:000555">
    <property type="entry name" value="Zinc finger protein 1 homolog"/>
    <property type="match status" value="1"/>
</dbReference>
<dbReference type="FunFam" id="3.30.160.60:FF:000139">
    <property type="entry name" value="zinc finger protein 1 homolog"/>
    <property type="match status" value="1"/>
</dbReference>
<dbReference type="FunFam" id="3.30.160.60:FF:000688">
    <property type="entry name" value="zinc finger protein 197 isoform X1"/>
    <property type="match status" value="1"/>
</dbReference>
<dbReference type="FunFam" id="3.30.160.60:FF:000848">
    <property type="entry name" value="Zinc finger protein 35"/>
    <property type="match status" value="1"/>
</dbReference>
<dbReference type="FunFam" id="3.30.160.60:FF:001727">
    <property type="entry name" value="Zinc finger protein 350"/>
    <property type="match status" value="1"/>
</dbReference>
<dbReference type="FunFam" id="3.30.160.60:FF:002797">
    <property type="entry name" value="Zinc finger protein 613"/>
    <property type="match status" value="1"/>
</dbReference>
<dbReference type="FunFam" id="3.30.160.60:FF:001531">
    <property type="entry name" value="Zinc finger protein 649"/>
    <property type="match status" value="1"/>
</dbReference>
<dbReference type="Gene3D" id="6.10.140.140">
    <property type="match status" value="1"/>
</dbReference>
<dbReference type="Gene3D" id="3.30.160.60">
    <property type="entry name" value="Classic Zinc Finger"/>
    <property type="match status" value="8"/>
</dbReference>
<dbReference type="InterPro" id="IPR001909">
    <property type="entry name" value="KRAB"/>
</dbReference>
<dbReference type="InterPro" id="IPR036051">
    <property type="entry name" value="KRAB_dom_sf"/>
</dbReference>
<dbReference type="InterPro" id="IPR050527">
    <property type="entry name" value="Snail/Krueppel_Znf"/>
</dbReference>
<dbReference type="InterPro" id="IPR036236">
    <property type="entry name" value="Znf_C2H2_sf"/>
</dbReference>
<dbReference type="InterPro" id="IPR013087">
    <property type="entry name" value="Znf_C2H2_type"/>
</dbReference>
<dbReference type="PANTHER" id="PTHR24388">
    <property type="entry name" value="ZINC FINGER PROTEIN"/>
    <property type="match status" value="1"/>
</dbReference>
<dbReference type="PANTHER" id="PTHR24388:SF51">
    <property type="entry name" value="ZINC FINGER PROTEIN 281-RELATED"/>
    <property type="match status" value="1"/>
</dbReference>
<dbReference type="Pfam" id="PF01352">
    <property type="entry name" value="KRAB"/>
    <property type="match status" value="1"/>
</dbReference>
<dbReference type="Pfam" id="PF00096">
    <property type="entry name" value="zf-C2H2"/>
    <property type="match status" value="6"/>
</dbReference>
<dbReference type="Pfam" id="PF13465">
    <property type="entry name" value="zf-H2C2_2"/>
    <property type="match status" value="1"/>
</dbReference>
<dbReference type="SMART" id="SM00349">
    <property type="entry name" value="KRAB"/>
    <property type="match status" value="1"/>
</dbReference>
<dbReference type="SMART" id="SM00355">
    <property type="entry name" value="ZnF_C2H2"/>
    <property type="match status" value="8"/>
</dbReference>
<dbReference type="SUPFAM" id="SSF57667">
    <property type="entry name" value="beta-beta-alpha zinc fingers"/>
    <property type="match status" value="4"/>
</dbReference>
<dbReference type="SUPFAM" id="SSF109640">
    <property type="entry name" value="KRAB domain (Kruppel-associated box)"/>
    <property type="match status" value="1"/>
</dbReference>
<dbReference type="PROSITE" id="PS50805">
    <property type="entry name" value="KRAB"/>
    <property type="match status" value="1"/>
</dbReference>
<dbReference type="PROSITE" id="PS00028">
    <property type="entry name" value="ZINC_FINGER_C2H2_1"/>
    <property type="match status" value="8"/>
</dbReference>
<dbReference type="PROSITE" id="PS50157">
    <property type="entry name" value="ZINC_FINGER_C2H2_2"/>
    <property type="match status" value="8"/>
</dbReference>
<gene>
    <name type="primary">ZNF350</name>
    <name type="synonym">ZBRK1</name>
</gene>
<feature type="chain" id="PRO_0000047546" description="Zinc finger protein 350">
    <location>
        <begin position="1"/>
        <end position="532"/>
    </location>
</feature>
<feature type="domain" description="KRAB" evidence="2">
    <location>
        <begin position="8"/>
        <end position="79"/>
    </location>
</feature>
<feature type="zinc finger region" description="C2H2-type 1" evidence="1">
    <location>
        <begin position="206"/>
        <end position="228"/>
    </location>
</feature>
<feature type="zinc finger region" description="C2H2-type 2" evidence="1">
    <location>
        <begin position="234"/>
        <end position="256"/>
    </location>
</feature>
<feature type="zinc finger region" description="C2H2-type 3" evidence="1">
    <location>
        <begin position="262"/>
        <end position="284"/>
    </location>
</feature>
<feature type="zinc finger region" description="C2H2-type 4" evidence="1">
    <location>
        <begin position="290"/>
        <end position="312"/>
    </location>
</feature>
<feature type="zinc finger region" description="C2H2-type 5" evidence="1">
    <location>
        <begin position="318"/>
        <end position="340"/>
    </location>
</feature>
<feature type="zinc finger region" description="C2H2-type 6" evidence="1">
    <location>
        <begin position="346"/>
        <end position="368"/>
    </location>
</feature>
<feature type="zinc finger region" description="C2H2-type 7" evidence="1">
    <location>
        <begin position="374"/>
        <end position="396"/>
    </location>
</feature>
<feature type="zinc finger region" description="C2H2-type 8" evidence="1">
    <location>
        <begin position="402"/>
        <end position="424"/>
    </location>
</feature>
<feature type="region of interest" description="Disordered" evidence="3">
    <location>
        <begin position="427"/>
        <end position="465"/>
    </location>
</feature>
<feature type="compositionally biased region" description="Basic and acidic residues" evidence="3">
    <location>
        <begin position="427"/>
        <end position="443"/>
    </location>
</feature>
<feature type="compositionally biased region" description="Polar residues" evidence="3">
    <location>
        <begin position="445"/>
        <end position="465"/>
    </location>
</feature>
<feature type="sequence variant" id="VAR_046718" description="In dbSNP:rs4987241.">
    <original>M</original>
    <variation>I</variation>
    <location>
        <position position="37"/>
    </location>
</feature>
<feature type="sequence variant" id="VAR_019902" description="In dbSNP:rs2278420." evidence="4 6 7">
    <original>L</original>
    <variation>P</variation>
    <location>
        <position position="66"/>
    </location>
</feature>
<feature type="sequence variant" id="VAR_046719" description="In dbSNP:rs4987042.">
    <original>I</original>
    <variation>T</variation>
    <location>
        <position position="69"/>
    </location>
</feature>
<feature type="sequence variant" id="VAR_046720" description="In dbSNP:rs28997584.">
    <original>R</original>
    <variation>C</variation>
    <location>
        <position position="132"/>
    </location>
</feature>
<feature type="sequence variant" id="VAR_046721" description="In dbSNP:rs3764539.">
    <original>E</original>
    <variation>K</variation>
    <location>
        <position position="406"/>
    </location>
</feature>
<feature type="sequence variant" id="VAR_019903" description="In dbSNP:rs4986771." evidence="6">
    <original>S</original>
    <variation>P</variation>
    <location>
        <position position="472"/>
    </location>
</feature>
<feature type="sequence variant" id="VAR_019904" description="In dbSNP:rs2278415." evidence="4 6 7">
    <original>R</original>
    <variation>S</variation>
    <location>
        <position position="501"/>
    </location>
</feature>
<feature type="sequence variant" id="VAR_019905" description="In dbSNP:rs4988337." evidence="5 6">
    <original>V</original>
    <variation>I</variation>
    <location>
        <position position="524"/>
    </location>
</feature>
<protein>
    <recommendedName>
        <fullName>Zinc finger protein 350</fullName>
    </recommendedName>
    <alternativeName>
        <fullName>KRAB zinc finger protein ZFQR</fullName>
    </alternativeName>
    <alternativeName>
        <fullName>Zinc finger and BRCA1-interacting protein with a KRAB domain 1</fullName>
    </alternativeName>
    <alternativeName>
        <fullName>Zinc finger protein ZBRK1</fullName>
    </alternativeName>
</protein>
<evidence type="ECO:0000255" key="1">
    <source>
        <dbReference type="PROSITE-ProRule" id="PRU00042"/>
    </source>
</evidence>
<evidence type="ECO:0000255" key="2">
    <source>
        <dbReference type="PROSITE-ProRule" id="PRU00119"/>
    </source>
</evidence>
<evidence type="ECO:0000256" key="3">
    <source>
        <dbReference type="SAM" id="MobiDB-lite"/>
    </source>
</evidence>
<evidence type="ECO:0000269" key="4">
    <source>
    </source>
</evidence>
<evidence type="ECO:0000269" key="5">
    <source>
    </source>
</evidence>
<evidence type="ECO:0000269" key="6">
    <source>
    </source>
</evidence>
<evidence type="ECO:0000269" key="7">
    <source>
    </source>
</evidence>
<evidence type="ECO:0000269" key="8">
    <source>
    </source>
</evidence>
<evidence type="ECO:0000305" key="9"/>
<name>ZN350_HUMAN</name>
<reference key="1">
    <citation type="journal article" date="2000" name="Mol. Cell">
        <title>Sequence-specific transcriptional corepressor function for BRCA1 through a novel zinc finger protein, ZBRK1.</title>
        <authorList>
            <person name="Zheng L."/>
            <person name="Pan H."/>
            <person name="Li S."/>
            <person name="Flesken-Nikitin A."/>
            <person name="Chen L.P."/>
            <person name="Boyer G.T."/>
            <person name="Lee H.W."/>
        </authorList>
    </citation>
    <scope>NUCLEOTIDE SEQUENCE [MRNA]</scope>
    <scope>VARIANTS PRO-66 AND SER-501</scope>
    <scope>FUNCTION</scope>
    <scope>INTERACTION WITH BRCA1</scope>
</reference>
<reference key="2">
    <citation type="journal article" date="2001" name="Exp. Cell Res.">
        <title>Characterization of a novel zinc finger gene with increased expression in nondividing normal human cells.</title>
        <authorList>
            <person name="Ran Q."/>
            <person name="Wadhwa R."/>
            <person name="Bischof O."/>
            <person name="Venable S."/>
            <person name="Smith J.R."/>
            <person name="Pereira-Smith O.M."/>
        </authorList>
    </citation>
    <scope>NUCLEOTIDE SEQUENCE [MRNA]</scope>
    <scope>VARIANT ILE-524</scope>
    <scope>TISSUE SPECIFICITY</scope>
    <scope>SUBCELLULAR LOCATION</scope>
</reference>
<reference key="3">
    <citation type="journal article" date="2004" name="Nat. Genet.">
        <title>Complete sequencing and characterization of 21,243 full-length human cDNAs.</title>
        <authorList>
            <person name="Ota T."/>
            <person name="Suzuki Y."/>
            <person name="Nishikawa T."/>
            <person name="Otsuki T."/>
            <person name="Sugiyama T."/>
            <person name="Irie R."/>
            <person name="Wakamatsu A."/>
            <person name="Hayashi K."/>
            <person name="Sato H."/>
            <person name="Nagai K."/>
            <person name="Kimura K."/>
            <person name="Makita H."/>
            <person name="Sekine M."/>
            <person name="Obayashi M."/>
            <person name="Nishi T."/>
            <person name="Shibahara T."/>
            <person name="Tanaka T."/>
            <person name="Ishii S."/>
            <person name="Yamamoto J."/>
            <person name="Saito K."/>
            <person name="Kawai Y."/>
            <person name="Isono Y."/>
            <person name="Nakamura Y."/>
            <person name="Nagahari K."/>
            <person name="Murakami K."/>
            <person name="Yasuda T."/>
            <person name="Iwayanagi T."/>
            <person name="Wagatsuma M."/>
            <person name="Shiratori A."/>
            <person name="Sudo H."/>
            <person name="Hosoiri T."/>
            <person name="Kaku Y."/>
            <person name="Kodaira H."/>
            <person name="Kondo H."/>
            <person name="Sugawara M."/>
            <person name="Takahashi M."/>
            <person name="Kanda K."/>
            <person name="Yokoi T."/>
            <person name="Furuya T."/>
            <person name="Kikkawa E."/>
            <person name="Omura Y."/>
            <person name="Abe K."/>
            <person name="Kamihara K."/>
            <person name="Katsuta N."/>
            <person name="Sato K."/>
            <person name="Tanikawa M."/>
            <person name="Yamazaki M."/>
            <person name="Ninomiya K."/>
            <person name="Ishibashi T."/>
            <person name="Yamashita H."/>
            <person name="Murakawa K."/>
            <person name="Fujimori K."/>
            <person name="Tanai H."/>
            <person name="Kimata M."/>
            <person name="Watanabe M."/>
            <person name="Hiraoka S."/>
            <person name="Chiba Y."/>
            <person name="Ishida S."/>
            <person name="Ono Y."/>
            <person name="Takiguchi S."/>
            <person name="Watanabe S."/>
            <person name="Yosida M."/>
            <person name="Hotuta T."/>
            <person name="Kusano J."/>
            <person name="Kanehori K."/>
            <person name="Takahashi-Fujii A."/>
            <person name="Hara H."/>
            <person name="Tanase T.-O."/>
            <person name="Nomura Y."/>
            <person name="Togiya S."/>
            <person name="Komai F."/>
            <person name="Hara R."/>
            <person name="Takeuchi K."/>
            <person name="Arita M."/>
            <person name="Imose N."/>
            <person name="Musashino K."/>
            <person name="Yuuki H."/>
            <person name="Oshima A."/>
            <person name="Sasaki N."/>
            <person name="Aotsuka S."/>
            <person name="Yoshikawa Y."/>
            <person name="Matsunawa H."/>
            <person name="Ichihara T."/>
            <person name="Shiohata N."/>
            <person name="Sano S."/>
            <person name="Moriya S."/>
            <person name="Momiyama H."/>
            <person name="Satoh N."/>
            <person name="Takami S."/>
            <person name="Terashima Y."/>
            <person name="Suzuki O."/>
            <person name="Nakagawa S."/>
            <person name="Senoh A."/>
            <person name="Mizoguchi H."/>
            <person name="Goto Y."/>
            <person name="Shimizu F."/>
            <person name="Wakebe H."/>
            <person name="Hishigaki H."/>
            <person name="Watanabe T."/>
            <person name="Sugiyama A."/>
            <person name="Takemoto M."/>
            <person name="Kawakami B."/>
            <person name="Yamazaki M."/>
            <person name="Watanabe K."/>
            <person name="Kumagai A."/>
            <person name="Itakura S."/>
            <person name="Fukuzumi Y."/>
            <person name="Fujimori Y."/>
            <person name="Komiyama M."/>
            <person name="Tashiro H."/>
            <person name="Tanigami A."/>
            <person name="Fujiwara T."/>
            <person name="Ono T."/>
            <person name="Yamada K."/>
            <person name="Fujii Y."/>
            <person name="Ozaki K."/>
            <person name="Hirao M."/>
            <person name="Ohmori Y."/>
            <person name="Kawabata A."/>
            <person name="Hikiji T."/>
            <person name="Kobatake N."/>
            <person name="Inagaki H."/>
            <person name="Ikema Y."/>
            <person name="Okamoto S."/>
            <person name="Okitani R."/>
            <person name="Kawakami T."/>
            <person name="Noguchi S."/>
            <person name="Itoh T."/>
            <person name="Shigeta K."/>
            <person name="Senba T."/>
            <person name="Matsumura K."/>
            <person name="Nakajima Y."/>
            <person name="Mizuno T."/>
            <person name="Morinaga M."/>
            <person name="Sasaki M."/>
            <person name="Togashi T."/>
            <person name="Oyama M."/>
            <person name="Hata H."/>
            <person name="Watanabe M."/>
            <person name="Komatsu T."/>
            <person name="Mizushima-Sugano J."/>
            <person name="Satoh T."/>
            <person name="Shirai Y."/>
            <person name="Takahashi Y."/>
            <person name="Nakagawa K."/>
            <person name="Okumura K."/>
            <person name="Nagase T."/>
            <person name="Nomura N."/>
            <person name="Kikuchi H."/>
            <person name="Masuho Y."/>
            <person name="Yamashita R."/>
            <person name="Nakai K."/>
            <person name="Yada T."/>
            <person name="Nakamura Y."/>
            <person name="Ohara O."/>
            <person name="Isogai T."/>
            <person name="Sugano S."/>
        </authorList>
    </citation>
    <scope>NUCLEOTIDE SEQUENCE [LARGE SCALE MRNA]</scope>
    <scope>VARIANTS PRO-66 AND SER-501</scope>
    <source>
        <tissue>Placenta</tissue>
    </source>
</reference>
<reference key="4">
    <citation type="journal article" date="2004" name="Nature">
        <title>The DNA sequence and biology of human chromosome 19.</title>
        <authorList>
            <person name="Grimwood J."/>
            <person name="Gordon L.A."/>
            <person name="Olsen A.S."/>
            <person name="Terry A."/>
            <person name="Schmutz J."/>
            <person name="Lamerdin J.E."/>
            <person name="Hellsten U."/>
            <person name="Goodstein D."/>
            <person name="Couronne O."/>
            <person name="Tran-Gyamfi M."/>
            <person name="Aerts A."/>
            <person name="Altherr M."/>
            <person name="Ashworth L."/>
            <person name="Bajorek E."/>
            <person name="Black S."/>
            <person name="Branscomb E."/>
            <person name="Caenepeel S."/>
            <person name="Carrano A.V."/>
            <person name="Caoile C."/>
            <person name="Chan Y.M."/>
            <person name="Christensen M."/>
            <person name="Cleland C.A."/>
            <person name="Copeland A."/>
            <person name="Dalin E."/>
            <person name="Dehal P."/>
            <person name="Denys M."/>
            <person name="Detter J.C."/>
            <person name="Escobar J."/>
            <person name="Flowers D."/>
            <person name="Fotopulos D."/>
            <person name="Garcia C."/>
            <person name="Georgescu A.M."/>
            <person name="Glavina T."/>
            <person name="Gomez M."/>
            <person name="Gonzales E."/>
            <person name="Groza M."/>
            <person name="Hammon N."/>
            <person name="Hawkins T."/>
            <person name="Haydu L."/>
            <person name="Ho I."/>
            <person name="Huang W."/>
            <person name="Israni S."/>
            <person name="Jett J."/>
            <person name="Kadner K."/>
            <person name="Kimball H."/>
            <person name="Kobayashi A."/>
            <person name="Larionov V."/>
            <person name="Leem S.-H."/>
            <person name="Lopez F."/>
            <person name="Lou Y."/>
            <person name="Lowry S."/>
            <person name="Malfatti S."/>
            <person name="Martinez D."/>
            <person name="McCready P.M."/>
            <person name="Medina C."/>
            <person name="Morgan J."/>
            <person name="Nelson K."/>
            <person name="Nolan M."/>
            <person name="Ovcharenko I."/>
            <person name="Pitluck S."/>
            <person name="Pollard M."/>
            <person name="Popkie A.P."/>
            <person name="Predki P."/>
            <person name="Quan G."/>
            <person name="Ramirez L."/>
            <person name="Rash S."/>
            <person name="Retterer J."/>
            <person name="Rodriguez A."/>
            <person name="Rogers S."/>
            <person name="Salamov A."/>
            <person name="Salazar A."/>
            <person name="She X."/>
            <person name="Smith D."/>
            <person name="Slezak T."/>
            <person name="Solovyev V."/>
            <person name="Thayer N."/>
            <person name="Tice H."/>
            <person name="Tsai M."/>
            <person name="Ustaszewska A."/>
            <person name="Vo N."/>
            <person name="Wagner M."/>
            <person name="Wheeler J."/>
            <person name="Wu K."/>
            <person name="Xie G."/>
            <person name="Yang J."/>
            <person name="Dubchak I."/>
            <person name="Furey T.S."/>
            <person name="DeJong P."/>
            <person name="Dickson M."/>
            <person name="Gordon D."/>
            <person name="Eichler E.E."/>
            <person name="Pennacchio L.A."/>
            <person name="Richardson P."/>
            <person name="Stubbs L."/>
            <person name="Rokhsar D.S."/>
            <person name="Myers R.M."/>
            <person name="Rubin E.M."/>
            <person name="Lucas S.M."/>
        </authorList>
    </citation>
    <scope>NUCLEOTIDE SEQUENCE [LARGE SCALE GENOMIC DNA]</scope>
</reference>
<reference key="5">
    <citation type="submission" date="2005-07" db="EMBL/GenBank/DDBJ databases">
        <authorList>
            <person name="Mural R.J."/>
            <person name="Istrail S."/>
            <person name="Sutton G.G."/>
            <person name="Florea L."/>
            <person name="Halpern A.L."/>
            <person name="Mobarry C.M."/>
            <person name="Lippert R."/>
            <person name="Walenz B."/>
            <person name="Shatkay H."/>
            <person name="Dew I."/>
            <person name="Miller J.R."/>
            <person name="Flanigan M.J."/>
            <person name="Edwards N.J."/>
            <person name="Bolanos R."/>
            <person name="Fasulo D."/>
            <person name="Halldorsson B.V."/>
            <person name="Hannenhalli S."/>
            <person name="Turner R."/>
            <person name="Yooseph S."/>
            <person name="Lu F."/>
            <person name="Nusskern D.R."/>
            <person name="Shue B.C."/>
            <person name="Zheng X.H."/>
            <person name="Zhong F."/>
            <person name="Delcher A.L."/>
            <person name="Huson D.H."/>
            <person name="Kravitz S.A."/>
            <person name="Mouchard L."/>
            <person name="Reinert K."/>
            <person name="Remington K.A."/>
            <person name="Clark A.G."/>
            <person name="Waterman M.S."/>
            <person name="Eichler E.E."/>
            <person name="Adams M.D."/>
            <person name="Hunkapiller M.W."/>
            <person name="Myers E.W."/>
            <person name="Venter J.C."/>
        </authorList>
    </citation>
    <scope>NUCLEOTIDE SEQUENCE [LARGE SCALE GENOMIC DNA]</scope>
</reference>
<reference key="6">
    <citation type="journal article" date="2004" name="Genome Res.">
        <title>The status, quality, and expansion of the NIH full-length cDNA project: the Mammalian Gene Collection (MGC).</title>
        <authorList>
            <consortium name="The MGC Project Team"/>
        </authorList>
    </citation>
    <scope>NUCLEOTIDE SEQUENCE [LARGE SCALE MRNA]</scope>
    <source>
        <tissue>Kidney</tissue>
    </source>
</reference>
<reference key="7">
    <citation type="journal article" date="2013" name="Cell. Mol. Life Sci.">
        <title>Novel activity of KRAB domain that functions to reinforce nuclear localization of KRAB-containing zinc finger proteins by interacting with KAP1.</title>
        <authorList>
            <person name="Wang W."/>
            <person name="Cai J."/>
            <person name="Wu Y."/>
            <person name="Hu L."/>
            <person name="Chen Z."/>
            <person name="Hu J."/>
            <person name="Chen Z."/>
            <person name="Li W."/>
            <person name="Guo M."/>
            <person name="Huang Z."/>
        </authorList>
    </citation>
    <scope>SUBCELLULAR LOCATION</scope>
</reference>
<reference key="8">
    <citation type="journal article" date="2003" name="Hum. Mutat.">
        <title>Mutational analysis of the BRCA1-interacting genes ZNF350/ZBRK1 and BRIP1/BACH1 among BRCA1 and BRCA2-negative probands from breast-ovarian cancer families and among early-onset breast cancer cases and reference individuals.</title>
        <authorList>
            <person name="Rutter J.L."/>
            <person name="Smith A.M."/>
            <person name="Davila M.R."/>
            <person name="Sigurdson A.J."/>
            <person name="Giusti R.M."/>
            <person name="Pineda M.A."/>
            <person name="Doody M.M."/>
            <person name="Tucker M.A."/>
            <person name="Greene M.H."/>
            <person name="Zhang J."/>
            <person name="Struewing J.P."/>
        </authorList>
    </citation>
    <scope>VARIANTS PRO-66; PRO-472; SER-501 AND ILE-524</scope>
</reference>
<reference key="9">
    <citation type="journal article" date="2004" name="Oncogene">
        <title>An RNF11: Smurf2 complex mediates ubiquitination of the AMSH protein.</title>
        <authorList>
            <person name="Li H."/>
            <person name="Seth A.K."/>
        </authorList>
    </citation>
    <scope>INTERACTION WITH RNF11</scope>
</reference>
<sequence>MIQAQESITLEDVAVDFTWEEWQLLGAAQKDLYRDVMLENYSNLVAVGYQASKPDALFKLEQGEQLWTIEDGIHSGACSDIWKVDHVLERLQSESLVNRRKPCHEHDAFENIVHCSKSQFLLGQNHDIFDLRGKSLKSNLTLVNQSKGYEIKNSVEFTGNGDSFLHANHERLHTAIKFPASQKLISTKSQFISPKHQKTRKLEKHHVCSECGKAFIKKSWLTDHQVMHTGEKPHRCSLCEKAFSRKFMLTEHQRTHTGEKPYECPECGKAFLKKSRLNIHQKTHTGEKPYICSECGKGFIQKGNLIVHQRIHTGEKPYICNECGKGFIQKTCLIAHQRFHTGKTPFVCSECGKSCSQKSGLIKHQRIHTGEKPFECSECGKAFSTKQKLIVHQRTHTGERPYGCNECGKAFAYMSCLVKHKRIHTREKQEAAKVENPPAERHSSLHTSDVMQEKNSANGATTQVPSVAPQTSLNISGLLANRNVVLVGQPVVRCAASGDNRGFAQDRNLVNAVNVVVPSVINYVLFYVTENP</sequence>
<comment type="function">
    <text evidence="4">Transcriptional repressor. Binds to a specific sequence, 5'-GGGxxxCAGxxxTTT-3', within GADD45 intron 3.</text>
</comment>
<comment type="subunit">
    <text evidence="4 8">Interacts with BRCA1. Interacts with RNF11.</text>
</comment>
<comment type="interaction">
    <interactant intactId="EBI-396421">
        <id>Q9GZX5</id>
    </interactant>
    <interactant intactId="EBI-349905">
        <id>P38398</id>
        <label>BRCA1</label>
    </interactant>
    <organismsDiffer>false</organismsDiffer>
    <experiments>3</experiments>
</comment>
<comment type="interaction">
    <interactant intactId="EBI-396421">
        <id>Q9GZX5</id>
    </interactant>
    <interactant intactId="EBI-78139">
        <id>Q13263</id>
        <label>TRIM28</label>
    </interactant>
    <organismsDiffer>false</organismsDiffer>
    <experiments>2</experiments>
</comment>
<comment type="subcellular location">
    <subcellularLocation>
        <location>Nucleus</location>
    </subcellularLocation>
    <subcellularLocation>
        <location>Nucleus matrix</location>
    </subcellularLocation>
    <text>Associated with the nuclear matrix.</text>
</comment>
<comment type="tissue specificity">
    <text evidence="5">Widely expressed.</text>
</comment>
<comment type="similarity">
    <text evidence="9">Belongs to the krueppel C2H2-type zinc-finger protein family.</text>
</comment>
<accession>Q9GZX5</accession>
<accession>Q96G73</accession>
<accession>Q9HAQ4</accession>